<protein>
    <recommendedName>
        <fullName evidence="1">Aspartyl/glutamyl-tRNA(Asn/Gln) amidotransferase subunit B</fullName>
        <shortName evidence="1">Asp/Glu-ADT subunit B</shortName>
        <ecNumber evidence="1">6.3.5.-</ecNumber>
    </recommendedName>
</protein>
<keyword id="KW-0067">ATP-binding</keyword>
<keyword id="KW-0436">Ligase</keyword>
<keyword id="KW-0547">Nucleotide-binding</keyword>
<keyword id="KW-0648">Protein biosynthesis</keyword>
<keyword id="KW-1185">Reference proteome</keyword>
<dbReference type="EC" id="6.3.5.-" evidence="1"/>
<dbReference type="EMBL" id="CP001191">
    <property type="protein sequence ID" value="ACI54818.1"/>
    <property type="molecule type" value="Genomic_DNA"/>
</dbReference>
<dbReference type="RefSeq" id="WP_012557514.1">
    <property type="nucleotide sequence ID" value="NC_011369.1"/>
</dbReference>
<dbReference type="SMR" id="B5ZMJ6"/>
<dbReference type="STRING" id="395492.Rleg2_1528"/>
<dbReference type="KEGG" id="rlt:Rleg2_1528"/>
<dbReference type="eggNOG" id="COG0064">
    <property type="taxonomic scope" value="Bacteria"/>
</dbReference>
<dbReference type="HOGENOM" id="CLU_019240_0_0_5"/>
<dbReference type="Proteomes" id="UP000008330">
    <property type="component" value="Chromosome"/>
</dbReference>
<dbReference type="GO" id="GO:0050566">
    <property type="term" value="F:asparaginyl-tRNA synthase (glutamine-hydrolyzing) activity"/>
    <property type="evidence" value="ECO:0007669"/>
    <property type="project" value="RHEA"/>
</dbReference>
<dbReference type="GO" id="GO:0005524">
    <property type="term" value="F:ATP binding"/>
    <property type="evidence" value="ECO:0007669"/>
    <property type="project" value="UniProtKB-KW"/>
</dbReference>
<dbReference type="GO" id="GO:0050567">
    <property type="term" value="F:glutaminyl-tRNA synthase (glutamine-hydrolyzing) activity"/>
    <property type="evidence" value="ECO:0007669"/>
    <property type="project" value="UniProtKB-UniRule"/>
</dbReference>
<dbReference type="GO" id="GO:0070681">
    <property type="term" value="P:glutaminyl-tRNAGln biosynthesis via transamidation"/>
    <property type="evidence" value="ECO:0007669"/>
    <property type="project" value="TreeGrafter"/>
</dbReference>
<dbReference type="GO" id="GO:0006412">
    <property type="term" value="P:translation"/>
    <property type="evidence" value="ECO:0007669"/>
    <property type="project" value="UniProtKB-UniRule"/>
</dbReference>
<dbReference type="FunFam" id="1.10.10.410:FF:000001">
    <property type="entry name" value="Aspartyl/glutamyl-tRNA(Asn/Gln) amidotransferase subunit B"/>
    <property type="match status" value="1"/>
</dbReference>
<dbReference type="FunFam" id="1.10.150.380:FF:000001">
    <property type="entry name" value="Aspartyl/glutamyl-tRNA(Asn/Gln) amidotransferase subunit B"/>
    <property type="match status" value="1"/>
</dbReference>
<dbReference type="Gene3D" id="1.10.10.410">
    <property type="match status" value="1"/>
</dbReference>
<dbReference type="Gene3D" id="1.10.150.380">
    <property type="entry name" value="GatB domain, N-terminal subdomain"/>
    <property type="match status" value="1"/>
</dbReference>
<dbReference type="HAMAP" id="MF_00121">
    <property type="entry name" value="GatB"/>
    <property type="match status" value="1"/>
</dbReference>
<dbReference type="InterPro" id="IPR017959">
    <property type="entry name" value="Asn/Gln-tRNA_amidoTrfase_suB/E"/>
</dbReference>
<dbReference type="InterPro" id="IPR006075">
    <property type="entry name" value="Asn/Gln-tRNA_Trfase_suB/E_cat"/>
</dbReference>
<dbReference type="InterPro" id="IPR018027">
    <property type="entry name" value="Asn/Gln_amidotransferase"/>
</dbReference>
<dbReference type="InterPro" id="IPR003789">
    <property type="entry name" value="Asn/Gln_tRNA_amidoTrase-B-like"/>
</dbReference>
<dbReference type="InterPro" id="IPR004413">
    <property type="entry name" value="GatB"/>
</dbReference>
<dbReference type="InterPro" id="IPR042114">
    <property type="entry name" value="GatB_C_1"/>
</dbReference>
<dbReference type="InterPro" id="IPR023168">
    <property type="entry name" value="GatB_Yqey_C_2"/>
</dbReference>
<dbReference type="InterPro" id="IPR017958">
    <property type="entry name" value="Gln-tRNA_amidoTrfase_suB_CS"/>
</dbReference>
<dbReference type="InterPro" id="IPR014746">
    <property type="entry name" value="Gln_synth/guanido_kin_cat_dom"/>
</dbReference>
<dbReference type="NCBIfam" id="TIGR00133">
    <property type="entry name" value="gatB"/>
    <property type="match status" value="1"/>
</dbReference>
<dbReference type="NCBIfam" id="NF004012">
    <property type="entry name" value="PRK05477.1-2"/>
    <property type="match status" value="1"/>
</dbReference>
<dbReference type="NCBIfam" id="NF004014">
    <property type="entry name" value="PRK05477.1-4"/>
    <property type="match status" value="1"/>
</dbReference>
<dbReference type="NCBIfam" id="NF004015">
    <property type="entry name" value="PRK05477.1-5"/>
    <property type="match status" value="1"/>
</dbReference>
<dbReference type="PANTHER" id="PTHR11659">
    <property type="entry name" value="GLUTAMYL-TRNA GLN AMIDOTRANSFERASE SUBUNIT B MITOCHONDRIAL AND PROKARYOTIC PET112-RELATED"/>
    <property type="match status" value="1"/>
</dbReference>
<dbReference type="PANTHER" id="PTHR11659:SF0">
    <property type="entry name" value="GLUTAMYL-TRNA(GLN) AMIDOTRANSFERASE SUBUNIT B, MITOCHONDRIAL"/>
    <property type="match status" value="1"/>
</dbReference>
<dbReference type="Pfam" id="PF02934">
    <property type="entry name" value="GatB_N"/>
    <property type="match status" value="1"/>
</dbReference>
<dbReference type="Pfam" id="PF02637">
    <property type="entry name" value="GatB_Yqey"/>
    <property type="match status" value="1"/>
</dbReference>
<dbReference type="SMART" id="SM00845">
    <property type="entry name" value="GatB_Yqey"/>
    <property type="match status" value="1"/>
</dbReference>
<dbReference type="SUPFAM" id="SSF89095">
    <property type="entry name" value="GatB/YqeY motif"/>
    <property type="match status" value="1"/>
</dbReference>
<dbReference type="SUPFAM" id="SSF55931">
    <property type="entry name" value="Glutamine synthetase/guanido kinase"/>
    <property type="match status" value="1"/>
</dbReference>
<dbReference type="PROSITE" id="PS01234">
    <property type="entry name" value="GATB"/>
    <property type="match status" value="1"/>
</dbReference>
<reference key="1">
    <citation type="journal article" date="2010" name="Stand. Genomic Sci.">
        <title>Complete genome sequence of Rhizobium leguminosarum bv trifolii strain WSM2304, an effective microsymbiont of the South American clover Trifolium polymorphum.</title>
        <authorList>
            <person name="Reeve W."/>
            <person name="O'Hara G."/>
            <person name="Chain P."/>
            <person name="Ardley J."/>
            <person name="Brau L."/>
            <person name="Nandesena K."/>
            <person name="Tiwari R."/>
            <person name="Malfatti S."/>
            <person name="Kiss H."/>
            <person name="Lapidus A."/>
            <person name="Copeland A."/>
            <person name="Nolan M."/>
            <person name="Land M."/>
            <person name="Ivanova N."/>
            <person name="Mavromatis K."/>
            <person name="Markowitz V."/>
            <person name="Kyrpides N."/>
            <person name="Melino V."/>
            <person name="Denton M."/>
            <person name="Yates R."/>
            <person name="Howieson J."/>
        </authorList>
    </citation>
    <scope>NUCLEOTIDE SEQUENCE [LARGE SCALE GENOMIC DNA]</scope>
    <source>
        <strain>WSM2304</strain>
    </source>
</reference>
<name>GATB_RHILW</name>
<comment type="function">
    <text evidence="1">Allows the formation of correctly charged Asn-tRNA(Asn) or Gln-tRNA(Gln) through the transamidation of misacylated Asp-tRNA(Asn) or Glu-tRNA(Gln) in organisms which lack either or both of asparaginyl-tRNA or glutaminyl-tRNA synthetases. The reaction takes place in the presence of glutamine and ATP through an activated phospho-Asp-tRNA(Asn) or phospho-Glu-tRNA(Gln).</text>
</comment>
<comment type="catalytic activity">
    <reaction evidence="1">
        <text>L-glutamyl-tRNA(Gln) + L-glutamine + ATP + H2O = L-glutaminyl-tRNA(Gln) + L-glutamate + ADP + phosphate + H(+)</text>
        <dbReference type="Rhea" id="RHEA:17521"/>
        <dbReference type="Rhea" id="RHEA-COMP:9681"/>
        <dbReference type="Rhea" id="RHEA-COMP:9684"/>
        <dbReference type="ChEBI" id="CHEBI:15377"/>
        <dbReference type="ChEBI" id="CHEBI:15378"/>
        <dbReference type="ChEBI" id="CHEBI:29985"/>
        <dbReference type="ChEBI" id="CHEBI:30616"/>
        <dbReference type="ChEBI" id="CHEBI:43474"/>
        <dbReference type="ChEBI" id="CHEBI:58359"/>
        <dbReference type="ChEBI" id="CHEBI:78520"/>
        <dbReference type="ChEBI" id="CHEBI:78521"/>
        <dbReference type="ChEBI" id="CHEBI:456216"/>
    </reaction>
</comment>
<comment type="catalytic activity">
    <reaction evidence="1">
        <text>L-aspartyl-tRNA(Asn) + L-glutamine + ATP + H2O = L-asparaginyl-tRNA(Asn) + L-glutamate + ADP + phosphate + 2 H(+)</text>
        <dbReference type="Rhea" id="RHEA:14513"/>
        <dbReference type="Rhea" id="RHEA-COMP:9674"/>
        <dbReference type="Rhea" id="RHEA-COMP:9677"/>
        <dbReference type="ChEBI" id="CHEBI:15377"/>
        <dbReference type="ChEBI" id="CHEBI:15378"/>
        <dbReference type="ChEBI" id="CHEBI:29985"/>
        <dbReference type="ChEBI" id="CHEBI:30616"/>
        <dbReference type="ChEBI" id="CHEBI:43474"/>
        <dbReference type="ChEBI" id="CHEBI:58359"/>
        <dbReference type="ChEBI" id="CHEBI:78515"/>
        <dbReference type="ChEBI" id="CHEBI:78516"/>
        <dbReference type="ChEBI" id="CHEBI:456216"/>
    </reaction>
</comment>
<comment type="subunit">
    <text evidence="1">Heterotrimer of A, B and C subunits.</text>
</comment>
<comment type="similarity">
    <text evidence="1">Belongs to the GatB/GatE family. GatB subfamily.</text>
</comment>
<gene>
    <name evidence="1" type="primary">gatB</name>
    <name type="ordered locus">Rleg2_1528</name>
</gene>
<feature type="chain" id="PRO_1000095237" description="Aspartyl/glutamyl-tRNA(Asn/Gln) amidotransferase subunit B">
    <location>
        <begin position="1"/>
        <end position="500"/>
    </location>
</feature>
<evidence type="ECO:0000255" key="1">
    <source>
        <dbReference type="HAMAP-Rule" id="MF_00121"/>
    </source>
</evidence>
<accession>B5ZMJ6</accession>
<sequence>MTLVDVRTPDPKRFIPGATGDWEVIVGMEVHAQVLSNSKLFSGASTEFGKPQNSNVSLVDAAMPGMLPVINEECVRQAVRTGLGLKAQINKRSLFDRKNYFYPDLPQGYQISQFKDPIVGEGKIVISLGPDRQGQFEDIEIGIERLHLEQDAGKSLHDQHATMSYVDLNRSGVALMEIVSKPDMRSSDEAKAYMTKLRSIVRYLGTCDGNMDEGSMRADVNVSVRRPGEGFGTRCEIKNVNSIRFIGQAIEYEARRQIGILEDGGTIEQETRLFDPNKGETRSMRSKEDAHDYRYFPDPDLLPLEFDDAFVSALAVDLPELPDDKKERFVRELGLSIYDASVLVSEKAIADYFEAVAAGRDGKTAANWVINDLLGALNRTGKDIEQTPVSPAQLGAIIDLIKAGTISGKIAKDLFEIVLTEGGDPAEIVDARGMKQVTDTGAIEKAVDEIIAANPDQVEKVKAKPTLAAWFVGQVMKATGGKANPQAVQALVKAKLGIEE</sequence>
<organism>
    <name type="scientific">Rhizobium leguminosarum bv. trifolii (strain WSM2304)</name>
    <dbReference type="NCBI Taxonomy" id="395492"/>
    <lineage>
        <taxon>Bacteria</taxon>
        <taxon>Pseudomonadati</taxon>
        <taxon>Pseudomonadota</taxon>
        <taxon>Alphaproteobacteria</taxon>
        <taxon>Hyphomicrobiales</taxon>
        <taxon>Rhizobiaceae</taxon>
        <taxon>Rhizobium/Agrobacterium group</taxon>
        <taxon>Rhizobium</taxon>
    </lineage>
</organism>
<proteinExistence type="inferred from homology"/>